<proteinExistence type="inferred from homology"/>
<evidence type="ECO:0000255" key="1">
    <source>
        <dbReference type="HAMAP-Rule" id="MF_01821"/>
    </source>
</evidence>
<comment type="function">
    <text evidence="1">Transcription regulator that activates transcription by stimulating RNA polymerase (RNAP) recycling in case of stress conditions such as supercoiled DNA or high salt concentrations. Probably acts by releasing the RNAP, when it is trapped or immobilized on tightly supercoiled DNA. Does not activate transcription on linear DNA. Probably not involved in DNA repair.</text>
</comment>
<comment type="subunit">
    <text evidence="1">Interacts with the RNAP. Has a higher affinity for the core RNAP than for the holoenzyme. Its ATPase activity is stimulated by binding to RNAP.</text>
</comment>
<comment type="similarity">
    <text evidence="1">Belongs to the SNF2/RAD54 helicase family. RapA subfamily.</text>
</comment>
<organism>
    <name type="scientific">Vibrio atlanticus (strain LGP32)</name>
    <name type="common">Vibrio splendidus (strain Mel32)</name>
    <dbReference type="NCBI Taxonomy" id="575788"/>
    <lineage>
        <taxon>Bacteria</taxon>
        <taxon>Pseudomonadati</taxon>
        <taxon>Pseudomonadota</taxon>
        <taxon>Gammaproteobacteria</taxon>
        <taxon>Vibrionales</taxon>
        <taxon>Vibrionaceae</taxon>
        <taxon>Vibrio</taxon>
    </lineage>
</organism>
<accession>B7VIC2</accession>
<feature type="chain" id="PRO_1000188197" description="RNA polymerase-associated protein RapA">
    <location>
        <begin position="1"/>
        <end position="969"/>
    </location>
</feature>
<feature type="domain" description="Helicase ATP-binding" evidence="1">
    <location>
        <begin position="164"/>
        <end position="334"/>
    </location>
</feature>
<feature type="domain" description="Helicase C-terminal" evidence="1">
    <location>
        <begin position="492"/>
        <end position="679"/>
    </location>
</feature>
<feature type="short sequence motif" description="DEAH box">
    <location>
        <begin position="280"/>
        <end position="283"/>
    </location>
</feature>
<feature type="binding site" evidence="1">
    <location>
        <begin position="177"/>
        <end position="184"/>
    </location>
    <ligand>
        <name>ATP</name>
        <dbReference type="ChEBI" id="CHEBI:30616"/>
    </ligand>
</feature>
<dbReference type="EC" id="3.6.4.-" evidence="1"/>
<dbReference type="EMBL" id="FM954972">
    <property type="protein sequence ID" value="CAV17359.1"/>
    <property type="molecule type" value="Genomic_DNA"/>
</dbReference>
<dbReference type="SMR" id="B7VIC2"/>
<dbReference type="STRING" id="575788.VS_0350"/>
<dbReference type="KEGG" id="vsp:VS_0350"/>
<dbReference type="PATRIC" id="fig|575788.5.peg.1716"/>
<dbReference type="eggNOG" id="COG0553">
    <property type="taxonomic scope" value="Bacteria"/>
</dbReference>
<dbReference type="HOGENOM" id="CLU_011520_0_0_6"/>
<dbReference type="Proteomes" id="UP000009100">
    <property type="component" value="Chromosome 1"/>
</dbReference>
<dbReference type="GO" id="GO:0005524">
    <property type="term" value="F:ATP binding"/>
    <property type="evidence" value="ECO:0007669"/>
    <property type="project" value="UniProtKB-UniRule"/>
</dbReference>
<dbReference type="GO" id="GO:0003677">
    <property type="term" value="F:DNA binding"/>
    <property type="evidence" value="ECO:0007669"/>
    <property type="project" value="UniProtKB-KW"/>
</dbReference>
<dbReference type="GO" id="GO:0004386">
    <property type="term" value="F:helicase activity"/>
    <property type="evidence" value="ECO:0007669"/>
    <property type="project" value="UniProtKB-UniRule"/>
</dbReference>
<dbReference type="GO" id="GO:0016817">
    <property type="term" value="F:hydrolase activity, acting on acid anhydrides"/>
    <property type="evidence" value="ECO:0007669"/>
    <property type="project" value="InterPro"/>
</dbReference>
<dbReference type="GO" id="GO:0006355">
    <property type="term" value="P:regulation of DNA-templated transcription"/>
    <property type="evidence" value="ECO:0007669"/>
    <property type="project" value="UniProtKB-UniRule"/>
</dbReference>
<dbReference type="CDD" id="cd18011">
    <property type="entry name" value="DEXDc_RapA"/>
    <property type="match status" value="1"/>
</dbReference>
<dbReference type="CDD" id="cd18793">
    <property type="entry name" value="SF2_C_SNF"/>
    <property type="match status" value="1"/>
</dbReference>
<dbReference type="Gene3D" id="2.30.30.140">
    <property type="match status" value="1"/>
</dbReference>
<dbReference type="Gene3D" id="2.30.30.930">
    <property type="match status" value="1"/>
</dbReference>
<dbReference type="Gene3D" id="3.30.360.80">
    <property type="match status" value="1"/>
</dbReference>
<dbReference type="Gene3D" id="6.10.140.1500">
    <property type="match status" value="1"/>
</dbReference>
<dbReference type="Gene3D" id="6.10.140.2230">
    <property type="match status" value="1"/>
</dbReference>
<dbReference type="Gene3D" id="3.40.50.300">
    <property type="entry name" value="P-loop containing nucleotide triphosphate hydrolases"/>
    <property type="match status" value="1"/>
</dbReference>
<dbReference type="Gene3D" id="3.40.50.10810">
    <property type="entry name" value="Tandem AAA-ATPase domain"/>
    <property type="match status" value="1"/>
</dbReference>
<dbReference type="HAMAP" id="MF_01821">
    <property type="entry name" value="Helicase_RapA"/>
    <property type="match status" value="1"/>
</dbReference>
<dbReference type="InterPro" id="IPR014001">
    <property type="entry name" value="Helicase_ATP-bd"/>
</dbReference>
<dbReference type="InterPro" id="IPR001650">
    <property type="entry name" value="Helicase_C-like"/>
</dbReference>
<dbReference type="InterPro" id="IPR023949">
    <property type="entry name" value="Helicase_RapA"/>
</dbReference>
<dbReference type="InterPro" id="IPR027417">
    <property type="entry name" value="P-loop_NTPase"/>
</dbReference>
<dbReference type="InterPro" id="IPR022737">
    <property type="entry name" value="RapA_C"/>
</dbReference>
<dbReference type="InterPro" id="IPR038718">
    <property type="entry name" value="SNF2-like_sf"/>
</dbReference>
<dbReference type="InterPro" id="IPR049730">
    <property type="entry name" value="SNF2/RAD54-like_C"/>
</dbReference>
<dbReference type="InterPro" id="IPR000330">
    <property type="entry name" value="SNF2_N"/>
</dbReference>
<dbReference type="InterPro" id="IPR040765">
    <property type="entry name" value="Tudor_1_RapA"/>
</dbReference>
<dbReference type="InterPro" id="IPR040766">
    <property type="entry name" value="Tudor_2_RapA"/>
</dbReference>
<dbReference type="NCBIfam" id="NF003426">
    <property type="entry name" value="PRK04914.1"/>
    <property type="match status" value="1"/>
</dbReference>
<dbReference type="PANTHER" id="PTHR45766">
    <property type="entry name" value="DNA ANNEALING HELICASE AND ENDONUCLEASE ZRANB3 FAMILY MEMBER"/>
    <property type="match status" value="1"/>
</dbReference>
<dbReference type="PANTHER" id="PTHR45766:SF6">
    <property type="entry name" value="SWI_SNF-RELATED MATRIX-ASSOCIATED ACTIN-DEPENDENT REGULATOR OF CHROMATIN SUBFAMILY A-LIKE PROTEIN 1"/>
    <property type="match status" value="1"/>
</dbReference>
<dbReference type="Pfam" id="PF00271">
    <property type="entry name" value="Helicase_C"/>
    <property type="match status" value="1"/>
</dbReference>
<dbReference type="Pfam" id="PF12137">
    <property type="entry name" value="RapA_C"/>
    <property type="match status" value="1"/>
</dbReference>
<dbReference type="Pfam" id="PF00176">
    <property type="entry name" value="SNF2-rel_dom"/>
    <property type="match status" value="1"/>
</dbReference>
<dbReference type="Pfam" id="PF18339">
    <property type="entry name" value="Tudor_1_RapA"/>
    <property type="match status" value="1"/>
</dbReference>
<dbReference type="Pfam" id="PF18337">
    <property type="entry name" value="Tudor_RapA"/>
    <property type="match status" value="1"/>
</dbReference>
<dbReference type="SMART" id="SM00487">
    <property type="entry name" value="DEXDc"/>
    <property type="match status" value="1"/>
</dbReference>
<dbReference type="SMART" id="SM00490">
    <property type="entry name" value="HELICc"/>
    <property type="match status" value="1"/>
</dbReference>
<dbReference type="SUPFAM" id="SSF52540">
    <property type="entry name" value="P-loop containing nucleoside triphosphate hydrolases"/>
    <property type="match status" value="2"/>
</dbReference>
<dbReference type="PROSITE" id="PS51192">
    <property type="entry name" value="HELICASE_ATP_BIND_1"/>
    <property type="match status" value="1"/>
</dbReference>
<dbReference type="PROSITE" id="PS51194">
    <property type="entry name" value="HELICASE_CTER"/>
    <property type="match status" value="1"/>
</dbReference>
<protein>
    <recommendedName>
        <fullName evidence="1">RNA polymerase-associated protein RapA</fullName>
        <ecNumber evidence="1">3.6.4.-</ecNumber>
    </recommendedName>
    <alternativeName>
        <fullName evidence="1">ATP-dependent helicase HepA</fullName>
    </alternativeName>
</protein>
<sequence length="969" mass="109501">MTFALGQRWISDTESDLGLGTVVAMDARTVTVMFAASEENRVYARTDAPVTRVAFNVGDVIECQEGWSLSVEEVIEDKGLLTYLGTREDTQETEVTLREIFLSNQIRFNKPQDKLYAGQIDRMDNFVLRYRALSNQYQQHKSPMRGLCGMRAGLIPHQLYIAHEVGRRHAPRVLLADEVGLGKTIEAGMIIHQQVLSGRAERILIVVPETLQHQWLVEMMRRFNLHFSIFDEERCIESFAESDNPFDTQQYVLCSLDFLRKSRKRYEQALEGEWDLLVVDEAHHLEWSQDKPSREYQVVEGLAENTSGVLLLTATPEQLGRESHFARLRLLDPDRFYDYEAFVEEEDQYAPVADAVTALFSGVKLENSAKNQITELLSEQDVEPLFRVIEGDSSEEEQALARQELIDNLMDRHGTGRVLFRNTRAAIKGFPKRNVNLLPMDIPTQYTTSMRVSGMIGGKMAPEARAMKMLYPEEIFQEFEGEDSSWWQFDSRVNWLIEKIQDKRSEKILVIASRASTALQLEQALREREGVRATVFHEGMSILERDKAAAYFAQEEGGAQVLICSEIGSEGRNFQFANQLVMFDLPFNPDLLEQRIGRLDRIGQLRDIDIHVPYLKGTSQAILARWFDEGLNAFAETCPTGRTVYDKYSDVLIEMLASGNTEQLDEVIEESAKLNQSLKSDLEKGRDRLLEMHSNGGDKAHEIAEKIASTDGDTNLVTFALSLFDTIGLNQDDKGENALVVTPSEHMMVPSYPGLPYEGATITFDRETALSREDMNFISWEHPMIQGGIDLLLSEGVGASAVSLLKNKALPVGTILLELVYLVDAQAPKRSGISQFLPKTPIRLMMDGRGNDLSAQVEFDSFNRQLSPVNRHLASKLVNSVQGEIHKLIEAGETHVLPKVEEVRQQAQKDMQTNLNGELERLQALKAVNPNIRDEELEVIEAQINELTGYISKAQVQLDSLRLIVVSHN</sequence>
<gene>
    <name evidence="1" type="primary">rapA</name>
    <name type="ordered locus">VS_0350</name>
</gene>
<keyword id="KW-0010">Activator</keyword>
<keyword id="KW-0067">ATP-binding</keyword>
<keyword id="KW-0238">DNA-binding</keyword>
<keyword id="KW-0347">Helicase</keyword>
<keyword id="KW-0378">Hydrolase</keyword>
<keyword id="KW-0547">Nucleotide-binding</keyword>
<keyword id="KW-0804">Transcription</keyword>
<keyword id="KW-0805">Transcription regulation</keyword>
<reference key="1">
    <citation type="submission" date="2009-02" db="EMBL/GenBank/DDBJ databases">
        <title>Vibrio splendidus str. LGP32 complete genome.</title>
        <authorList>
            <person name="Mazel D."/>
            <person name="Le Roux F."/>
        </authorList>
    </citation>
    <scope>NUCLEOTIDE SEQUENCE [LARGE SCALE GENOMIC DNA]</scope>
    <source>
        <strain>LGP32</strain>
    </source>
</reference>
<name>RAPA_VIBA3</name>